<name>Y2562_CERS5</name>
<accession>A4WVN6</accession>
<feature type="chain" id="PRO_1000056850" description="Nucleotide-binding protein Rsph17025_2562">
    <location>
        <begin position="1"/>
        <end position="302"/>
    </location>
</feature>
<feature type="binding site" evidence="1">
    <location>
        <begin position="15"/>
        <end position="22"/>
    </location>
    <ligand>
        <name>ATP</name>
        <dbReference type="ChEBI" id="CHEBI:30616"/>
    </ligand>
</feature>
<feature type="binding site" evidence="1">
    <location>
        <begin position="62"/>
        <end position="65"/>
    </location>
    <ligand>
        <name>GTP</name>
        <dbReference type="ChEBI" id="CHEBI:37565"/>
    </ligand>
</feature>
<reference key="1">
    <citation type="submission" date="2007-04" db="EMBL/GenBank/DDBJ databases">
        <title>Complete sequence of chromosome of Rhodobacter sphaeroides ATCC 17025.</title>
        <authorList>
            <consortium name="US DOE Joint Genome Institute"/>
            <person name="Copeland A."/>
            <person name="Lucas S."/>
            <person name="Lapidus A."/>
            <person name="Barry K."/>
            <person name="Detter J.C."/>
            <person name="Glavina del Rio T."/>
            <person name="Hammon N."/>
            <person name="Israni S."/>
            <person name="Dalin E."/>
            <person name="Tice H."/>
            <person name="Pitluck S."/>
            <person name="Chertkov O."/>
            <person name="Brettin T."/>
            <person name="Bruce D."/>
            <person name="Han C."/>
            <person name="Schmutz J."/>
            <person name="Larimer F."/>
            <person name="Land M."/>
            <person name="Hauser L."/>
            <person name="Kyrpides N."/>
            <person name="Kim E."/>
            <person name="Richardson P."/>
            <person name="Mackenzie C."/>
            <person name="Choudhary M."/>
            <person name="Donohue T.J."/>
            <person name="Kaplan S."/>
        </authorList>
    </citation>
    <scope>NUCLEOTIDE SEQUENCE [LARGE SCALE GENOMIC DNA]</scope>
    <source>
        <strain>ATCC 17025 / ATH 2.4.3</strain>
    </source>
</reference>
<proteinExistence type="inferred from homology"/>
<comment type="function">
    <text evidence="1">Displays ATPase and GTPase activities.</text>
</comment>
<comment type="similarity">
    <text evidence="1">Belongs to the RapZ-like family.</text>
</comment>
<evidence type="ECO:0000255" key="1">
    <source>
        <dbReference type="HAMAP-Rule" id="MF_00636"/>
    </source>
</evidence>
<protein>
    <recommendedName>
        <fullName evidence="1">Nucleotide-binding protein Rsph17025_2562</fullName>
    </recommendedName>
</protein>
<keyword id="KW-0067">ATP-binding</keyword>
<keyword id="KW-0342">GTP-binding</keyword>
<keyword id="KW-0547">Nucleotide-binding</keyword>
<sequence length="302" mass="33452">MSEPAQEYRLVLVTGPSGAGRTTAVNALEDMGYEVIDNLPLSFVPRLIEGPAIGPPIALGLDVRNRDFNATALIELIDGLTQDARVQLEVLYVDCSASELIRRYSQTRRRHPLAPAETPAEGVEREIDLLAPVRARADHLIDTSEMSPHDLKAELARWFDRGAATRLAVSVQSFSYKRGVPRGVDMIFDCRFLRNPYWVESLRALDGRDAAVEDYIRSDPRFAPFLEKLRELVLFLLPAQLEEGKAHLSIGFGCTGGQHRSVAVAEILGKALAEAGWPVSKRHRELERRAAAVLPTHQGEKA</sequence>
<organism>
    <name type="scientific">Cereibacter sphaeroides (strain ATCC 17025 / ATH 2.4.3)</name>
    <name type="common">Rhodobacter sphaeroides</name>
    <dbReference type="NCBI Taxonomy" id="349102"/>
    <lineage>
        <taxon>Bacteria</taxon>
        <taxon>Pseudomonadati</taxon>
        <taxon>Pseudomonadota</taxon>
        <taxon>Alphaproteobacteria</taxon>
        <taxon>Rhodobacterales</taxon>
        <taxon>Paracoccaceae</taxon>
        <taxon>Cereibacter</taxon>
    </lineage>
</organism>
<gene>
    <name type="ordered locus">Rsph17025_2562</name>
</gene>
<dbReference type="EMBL" id="CP000661">
    <property type="protein sequence ID" value="ABP71450.1"/>
    <property type="molecule type" value="Genomic_DNA"/>
</dbReference>
<dbReference type="SMR" id="A4WVN6"/>
<dbReference type="STRING" id="349102.Rsph17025_2562"/>
<dbReference type="KEGG" id="rsq:Rsph17025_2562"/>
<dbReference type="eggNOG" id="COG1660">
    <property type="taxonomic scope" value="Bacteria"/>
</dbReference>
<dbReference type="HOGENOM" id="CLU_059558_0_0_5"/>
<dbReference type="BioCyc" id="RSPH349102:G1G8M-2641-MONOMER"/>
<dbReference type="GO" id="GO:0005524">
    <property type="term" value="F:ATP binding"/>
    <property type="evidence" value="ECO:0007669"/>
    <property type="project" value="UniProtKB-UniRule"/>
</dbReference>
<dbReference type="GO" id="GO:0005525">
    <property type="term" value="F:GTP binding"/>
    <property type="evidence" value="ECO:0007669"/>
    <property type="project" value="UniProtKB-UniRule"/>
</dbReference>
<dbReference type="Gene3D" id="3.40.50.300">
    <property type="entry name" value="P-loop containing nucleotide triphosphate hydrolases"/>
    <property type="match status" value="1"/>
</dbReference>
<dbReference type="HAMAP" id="MF_00636">
    <property type="entry name" value="RapZ_like"/>
    <property type="match status" value="1"/>
</dbReference>
<dbReference type="InterPro" id="IPR027417">
    <property type="entry name" value="P-loop_NTPase"/>
</dbReference>
<dbReference type="InterPro" id="IPR005337">
    <property type="entry name" value="RapZ-like"/>
</dbReference>
<dbReference type="InterPro" id="IPR053930">
    <property type="entry name" value="RapZ-like_N"/>
</dbReference>
<dbReference type="InterPro" id="IPR053931">
    <property type="entry name" value="RapZ_C"/>
</dbReference>
<dbReference type="NCBIfam" id="NF003828">
    <property type="entry name" value="PRK05416.1"/>
    <property type="match status" value="1"/>
</dbReference>
<dbReference type="PANTHER" id="PTHR30448">
    <property type="entry name" value="RNASE ADAPTER PROTEIN RAPZ"/>
    <property type="match status" value="1"/>
</dbReference>
<dbReference type="PANTHER" id="PTHR30448:SF0">
    <property type="entry name" value="RNASE ADAPTER PROTEIN RAPZ"/>
    <property type="match status" value="1"/>
</dbReference>
<dbReference type="Pfam" id="PF22740">
    <property type="entry name" value="PapZ_C"/>
    <property type="match status" value="1"/>
</dbReference>
<dbReference type="Pfam" id="PF03668">
    <property type="entry name" value="RapZ-like_N"/>
    <property type="match status" value="1"/>
</dbReference>
<dbReference type="PIRSF" id="PIRSF005052">
    <property type="entry name" value="P-loopkin"/>
    <property type="match status" value="1"/>
</dbReference>
<dbReference type="SUPFAM" id="SSF52540">
    <property type="entry name" value="P-loop containing nucleoside triphosphate hydrolases"/>
    <property type="match status" value="1"/>
</dbReference>